<evidence type="ECO:0000255" key="1">
    <source>
        <dbReference type="HAMAP-Rule" id="MF_00443"/>
    </source>
</evidence>
<name>THIG_COXBU</name>
<dbReference type="EC" id="2.8.1.10" evidence="1"/>
<dbReference type="EMBL" id="AE016828">
    <property type="protein sequence ID" value="AAO89889.1"/>
    <property type="molecule type" value="Genomic_DNA"/>
</dbReference>
<dbReference type="RefSeq" id="NP_819375.1">
    <property type="nucleotide sequence ID" value="NC_002971.4"/>
</dbReference>
<dbReference type="RefSeq" id="WP_010957509.1">
    <property type="nucleotide sequence ID" value="NC_002971.4"/>
</dbReference>
<dbReference type="SMR" id="Q83EI7"/>
<dbReference type="STRING" id="227377.CBU_0333"/>
<dbReference type="DNASU" id="1208215"/>
<dbReference type="EnsemblBacteria" id="AAO89889">
    <property type="protein sequence ID" value="AAO89889"/>
    <property type="gene ID" value="CBU_0333"/>
</dbReference>
<dbReference type="GeneID" id="1208215"/>
<dbReference type="KEGG" id="cbu:CBU_0333"/>
<dbReference type="PATRIC" id="fig|227377.7.peg.327"/>
<dbReference type="eggNOG" id="COG2022">
    <property type="taxonomic scope" value="Bacteria"/>
</dbReference>
<dbReference type="HOGENOM" id="CLU_062233_1_0_6"/>
<dbReference type="OrthoDB" id="9805935at2"/>
<dbReference type="UniPathway" id="UPA00060"/>
<dbReference type="Proteomes" id="UP000002671">
    <property type="component" value="Chromosome"/>
</dbReference>
<dbReference type="GO" id="GO:1902508">
    <property type="term" value="C:2-iminoacetate synthase complex"/>
    <property type="evidence" value="ECO:0000318"/>
    <property type="project" value="GO_Central"/>
</dbReference>
<dbReference type="GO" id="GO:0005737">
    <property type="term" value="C:cytoplasm"/>
    <property type="evidence" value="ECO:0007669"/>
    <property type="project" value="UniProtKB-SubCell"/>
</dbReference>
<dbReference type="GO" id="GO:1990107">
    <property type="term" value="F:thiazole synthase activity"/>
    <property type="evidence" value="ECO:0007669"/>
    <property type="project" value="UniProtKB-EC"/>
</dbReference>
<dbReference type="GO" id="GO:0009228">
    <property type="term" value="P:thiamine biosynthetic process"/>
    <property type="evidence" value="ECO:0000318"/>
    <property type="project" value="GO_Central"/>
</dbReference>
<dbReference type="GO" id="GO:0009229">
    <property type="term" value="P:thiamine diphosphate biosynthetic process"/>
    <property type="evidence" value="ECO:0000318"/>
    <property type="project" value="GO_Central"/>
</dbReference>
<dbReference type="CDD" id="cd04728">
    <property type="entry name" value="ThiG"/>
    <property type="match status" value="1"/>
</dbReference>
<dbReference type="FunFam" id="3.20.20.70:FF:000378">
    <property type="entry name" value="Thiazole synthase"/>
    <property type="match status" value="1"/>
</dbReference>
<dbReference type="Gene3D" id="3.20.20.70">
    <property type="entry name" value="Aldolase class I"/>
    <property type="match status" value="1"/>
</dbReference>
<dbReference type="HAMAP" id="MF_00443">
    <property type="entry name" value="ThiG"/>
    <property type="match status" value="1"/>
</dbReference>
<dbReference type="InterPro" id="IPR013785">
    <property type="entry name" value="Aldolase_TIM"/>
</dbReference>
<dbReference type="InterPro" id="IPR033983">
    <property type="entry name" value="Thiazole_synthase_ThiG"/>
</dbReference>
<dbReference type="InterPro" id="IPR008867">
    <property type="entry name" value="ThiG"/>
</dbReference>
<dbReference type="PANTHER" id="PTHR34266">
    <property type="entry name" value="THIAZOLE SYNTHASE"/>
    <property type="match status" value="1"/>
</dbReference>
<dbReference type="PANTHER" id="PTHR34266:SF2">
    <property type="entry name" value="THIAZOLE SYNTHASE"/>
    <property type="match status" value="1"/>
</dbReference>
<dbReference type="Pfam" id="PF05690">
    <property type="entry name" value="ThiG"/>
    <property type="match status" value="1"/>
</dbReference>
<dbReference type="SUPFAM" id="SSF110399">
    <property type="entry name" value="ThiG-like"/>
    <property type="match status" value="1"/>
</dbReference>
<feature type="chain" id="PRO_0000162812" description="Thiazole synthase">
    <location>
        <begin position="1"/>
        <end position="259"/>
    </location>
</feature>
<feature type="active site" description="Schiff-base intermediate with DXP" evidence="1">
    <location>
        <position position="95"/>
    </location>
</feature>
<feature type="binding site" evidence="1">
    <location>
        <position position="156"/>
    </location>
    <ligand>
        <name>1-deoxy-D-xylulose 5-phosphate</name>
        <dbReference type="ChEBI" id="CHEBI:57792"/>
    </ligand>
</feature>
<feature type="binding site" evidence="1">
    <location>
        <begin position="183"/>
        <end position="184"/>
    </location>
    <ligand>
        <name>1-deoxy-D-xylulose 5-phosphate</name>
        <dbReference type="ChEBI" id="CHEBI:57792"/>
    </ligand>
</feature>
<feature type="binding site" evidence="1">
    <location>
        <begin position="205"/>
        <end position="206"/>
    </location>
    <ligand>
        <name>1-deoxy-D-xylulose 5-phosphate</name>
        <dbReference type="ChEBI" id="CHEBI:57792"/>
    </ligand>
</feature>
<comment type="function">
    <text evidence="1">Catalyzes the rearrangement of 1-deoxy-D-xylulose 5-phosphate (DXP) to produce the thiazole phosphate moiety of thiamine. Sulfur is provided by the thiocarboxylate moiety of the carrier protein ThiS. In vitro, sulfur can be provided by H(2)S.</text>
</comment>
<comment type="catalytic activity">
    <reaction evidence="1">
        <text>[ThiS sulfur-carrier protein]-C-terminal-Gly-aminoethanethioate + 2-iminoacetate + 1-deoxy-D-xylulose 5-phosphate = [ThiS sulfur-carrier protein]-C-terminal Gly-Gly + 2-[(2R,5Z)-2-carboxy-4-methylthiazol-5(2H)-ylidene]ethyl phosphate + 2 H2O + H(+)</text>
        <dbReference type="Rhea" id="RHEA:26297"/>
        <dbReference type="Rhea" id="RHEA-COMP:12909"/>
        <dbReference type="Rhea" id="RHEA-COMP:19908"/>
        <dbReference type="ChEBI" id="CHEBI:15377"/>
        <dbReference type="ChEBI" id="CHEBI:15378"/>
        <dbReference type="ChEBI" id="CHEBI:57792"/>
        <dbReference type="ChEBI" id="CHEBI:62899"/>
        <dbReference type="ChEBI" id="CHEBI:77846"/>
        <dbReference type="ChEBI" id="CHEBI:90778"/>
        <dbReference type="ChEBI" id="CHEBI:232372"/>
        <dbReference type="EC" id="2.8.1.10"/>
    </reaction>
</comment>
<comment type="pathway">
    <text evidence="1">Cofactor biosynthesis; thiamine diphosphate biosynthesis.</text>
</comment>
<comment type="subunit">
    <text evidence="1">Homotetramer. Forms heterodimers with either ThiH or ThiS.</text>
</comment>
<comment type="subcellular location">
    <subcellularLocation>
        <location evidence="1">Cytoplasm</location>
    </subcellularLocation>
</comment>
<comment type="similarity">
    <text evidence="1">Belongs to the ThiG family.</text>
</comment>
<organism>
    <name type="scientific">Coxiella burnetii (strain RSA 493 / Nine Mile phase I)</name>
    <dbReference type="NCBI Taxonomy" id="227377"/>
    <lineage>
        <taxon>Bacteria</taxon>
        <taxon>Pseudomonadati</taxon>
        <taxon>Pseudomonadota</taxon>
        <taxon>Gammaproteobacteria</taxon>
        <taxon>Legionellales</taxon>
        <taxon>Coxiellaceae</taxon>
        <taxon>Coxiella</taxon>
    </lineage>
</organism>
<protein>
    <recommendedName>
        <fullName evidence="1">Thiazole synthase</fullName>
        <ecNumber evidence="1">2.8.1.10</ecNumber>
    </recommendedName>
</protein>
<reference key="1">
    <citation type="journal article" date="2003" name="Proc. Natl. Acad. Sci. U.S.A.">
        <title>Complete genome sequence of the Q-fever pathogen, Coxiella burnetii.</title>
        <authorList>
            <person name="Seshadri R."/>
            <person name="Paulsen I.T."/>
            <person name="Eisen J.A."/>
            <person name="Read T.D."/>
            <person name="Nelson K.E."/>
            <person name="Nelson W.C."/>
            <person name="Ward N.L."/>
            <person name="Tettelin H."/>
            <person name="Davidsen T.M."/>
            <person name="Beanan M.J."/>
            <person name="DeBoy R.T."/>
            <person name="Daugherty S.C."/>
            <person name="Brinkac L.M."/>
            <person name="Madupu R."/>
            <person name="Dodson R.J."/>
            <person name="Khouri H.M."/>
            <person name="Lee K.H."/>
            <person name="Carty H.A."/>
            <person name="Scanlan D."/>
            <person name="Heinzen R.A."/>
            <person name="Thompson H.A."/>
            <person name="Samuel J.E."/>
            <person name="Fraser C.M."/>
            <person name="Heidelberg J.F."/>
        </authorList>
    </citation>
    <scope>NUCLEOTIDE SEQUENCE [LARGE SCALE GENOMIC DNA]</scope>
    <source>
        <strain>RSA 493 / Nine Mile phase I</strain>
    </source>
</reference>
<sequence>MWAIGGVQLNSRLLLGTAQYPSPQLMSDAVKAAGVEIITVSLRRQLSPQKENYFWDLLRSLPCHLLPNTAGCSSVKEAVNTARAARELFNTHWIKLEIIGDEYTLQPNPFELVNAATILVKEGFEVFPYCTEDLILCQRLVDAGCRVLMPWAAPIGSGRGLMNTYALQVLRERFPKNILIIDAGLGRPSHAAQVMEMGFDAVLLNSAVALAMDPVVMAAGFAKAVEGGRLGYEGGMIKARNVAKATTPLIGKPFLIEKP</sequence>
<accession>Q83EI7</accession>
<proteinExistence type="inferred from homology"/>
<keyword id="KW-0963">Cytoplasm</keyword>
<keyword id="KW-1185">Reference proteome</keyword>
<keyword id="KW-0704">Schiff base</keyword>
<keyword id="KW-0784">Thiamine biosynthesis</keyword>
<keyword id="KW-0808">Transferase</keyword>
<gene>
    <name evidence="1" type="primary">thiG</name>
    <name type="ordered locus">CBU_0333</name>
</gene>